<feature type="chain" id="PRO_0000332915" description="Cysteine--tRNA ligase">
    <location>
        <begin position="1"/>
        <end position="461"/>
    </location>
</feature>
<feature type="short sequence motif" description="'HIGH' region">
    <location>
        <begin position="30"/>
        <end position="40"/>
    </location>
</feature>
<feature type="short sequence motif" description="'KMSKS' region">
    <location>
        <begin position="266"/>
        <end position="270"/>
    </location>
</feature>
<feature type="binding site" evidence="1">
    <location>
        <position position="28"/>
    </location>
    <ligand>
        <name>Zn(2+)</name>
        <dbReference type="ChEBI" id="CHEBI:29105"/>
    </ligand>
</feature>
<feature type="binding site" evidence="1">
    <location>
        <position position="209"/>
    </location>
    <ligand>
        <name>Zn(2+)</name>
        <dbReference type="ChEBI" id="CHEBI:29105"/>
    </ligand>
</feature>
<feature type="binding site" evidence="1">
    <location>
        <position position="234"/>
    </location>
    <ligand>
        <name>Zn(2+)</name>
        <dbReference type="ChEBI" id="CHEBI:29105"/>
    </ligand>
</feature>
<feature type="binding site" evidence="1">
    <location>
        <position position="238"/>
    </location>
    <ligand>
        <name>Zn(2+)</name>
        <dbReference type="ChEBI" id="CHEBI:29105"/>
    </ligand>
</feature>
<feature type="binding site" evidence="1">
    <location>
        <position position="269"/>
    </location>
    <ligand>
        <name>ATP</name>
        <dbReference type="ChEBI" id="CHEBI:30616"/>
    </ligand>
</feature>
<dbReference type="EC" id="6.1.1.16" evidence="1"/>
<dbReference type="EMBL" id="CP000308">
    <property type="protein sequence ID" value="ABG14531.1"/>
    <property type="molecule type" value="Genomic_DNA"/>
</dbReference>
<dbReference type="RefSeq" id="WP_002222677.1">
    <property type="nucleotide sequence ID" value="NZ_CP009906.1"/>
</dbReference>
<dbReference type="SMR" id="Q1C4U1"/>
<dbReference type="GeneID" id="57975631"/>
<dbReference type="KEGG" id="ypa:YPA_2568"/>
<dbReference type="Proteomes" id="UP000001971">
    <property type="component" value="Chromosome"/>
</dbReference>
<dbReference type="GO" id="GO:0005829">
    <property type="term" value="C:cytosol"/>
    <property type="evidence" value="ECO:0007669"/>
    <property type="project" value="TreeGrafter"/>
</dbReference>
<dbReference type="GO" id="GO:0005524">
    <property type="term" value="F:ATP binding"/>
    <property type="evidence" value="ECO:0007669"/>
    <property type="project" value="UniProtKB-UniRule"/>
</dbReference>
<dbReference type="GO" id="GO:0004817">
    <property type="term" value="F:cysteine-tRNA ligase activity"/>
    <property type="evidence" value="ECO:0007669"/>
    <property type="project" value="UniProtKB-UniRule"/>
</dbReference>
<dbReference type="GO" id="GO:0008270">
    <property type="term" value="F:zinc ion binding"/>
    <property type="evidence" value="ECO:0007669"/>
    <property type="project" value="UniProtKB-UniRule"/>
</dbReference>
<dbReference type="GO" id="GO:0006423">
    <property type="term" value="P:cysteinyl-tRNA aminoacylation"/>
    <property type="evidence" value="ECO:0007669"/>
    <property type="project" value="UniProtKB-UniRule"/>
</dbReference>
<dbReference type="CDD" id="cd07963">
    <property type="entry name" value="Anticodon_Ia_Cys"/>
    <property type="match status" value="1"/>
</dbReference>
<dbReference type="CDD" id="cd00672">
    <property type="entry name" value="CysRS_core"/>
    <property type="match status" value="1"/>
</dbReference>
<dbReference type="FunFam" id="1.20.120.1910:FF:000001">
    <property type="entry name" value="Cysteine--tRNA ligase"/>
    <property type="match status" value="1"/>
</dbReference>
<dbReference type="FunFam" id="3.40.50.620:FF:000009">
    <property type="entry name" value="Cysteine--tRNA ligase"/>
    <property type="match status" value="1"/>
</dbReference>
<dbReference type="Gene3D" id="1.20.120.1910">
    <property type="entry name" value="Cysteine-tRNA ligase, C-terminal anti-codon recognition domain"/>
    <property type="match status" value="1"/>
</dbReference>
<dbReference type="Gene3D" id="3.40.50.620">
    <property type="entry name" value="HUPs"/>
    <property type="match status" value="1"/>
</dbReference>
<dbReference type="HAMAP" id="MF_00041">
    <property type="entry name" value="Cys_tRNA_synth"/>
    <property type="match status" value="1"/>
</dbReference>
<dbReference type="InterPro" id="IPR015803">
    <property type="entry name" value="Cys-tRNA-ligase"/>
</dbReference>
<dbReference type="InterPro" id="IPR015273">
    <property type="entry name" value="Cys-tRNA-synt_Ia_DALR"/>
</dbReference>
<dbReference type="InterPro" id="IPR024909">
    <property type="entry name" value="Cys-tRNA/MSH_ligase"/>
</dbReference>
<dbReference type="InterPro" id="IPR056411">
    <property type="entry name" value="CysS_C"/>
</dbReference>
<dbReference type="InterPro" id="IPR014729">
    <property type="entry name" value="Rossmann-like_a/b/a_fold"/>
</dbReference>
<dbReference type="InterPro" id="IPR032678">
    <property type="entry name" value="tRNA-synt_1_cat_dom"/>
</dbReference>
<dbReference type="InterPro" id="IPR009080">
    <property type="entry name" value="tRNAsynth_Ia_anticodon-bd"/>
</dbReference>
<dbReference type="NCBIfam" id="TIGR00435">
    <property type="entry name" value="cysS"/>
    <property type="match status" value="1"/>
</dbReference>
<dbReference type="PANTHER" id="PTHR10890:SF3">
    <property type="entry name" value="CYSTEINE--TRNA LIGASE, CYTOPLASMIC"/>
    <property type="match status" value="1"/>
</dbReference>
<dbReference type="PANTHER" id="PTHR10890">
    <property type="entry name" value="CYSTEINYL-TRNA SYNTHETASE"/>
    <property type="match status" value="1"/>
</dbReference>
<dbReference type="Pfam" id="PF23493">
    <property type="entry name" value="CysS_C"/>
    <property type="match status" value="1"/>
</dbReference>
<dbReference type="Pfam" id="PF09190">
    <property type="entry name" value="DALR_2"/>
    <property type="match status" value="1"/>
</dbReference>
<dbReference type="Pfam" id="PF01406">
    <property type="entry name" value="tRNA-synt_1e"/>
    <property type="match status" value="1"/>
</dbReference>
<dbReference type="PRINTS" id="PR00983">
    <property type="entry name" value="TRNASYNTHCYS"/>
</dbReference>
<dbReference type="SMART" id="SM00840">
    <property type="entry name" value="DALR_2"/>
    <property type="match status" value="1"/>
</dbReference>
<dbReference type="SUPFAM" id="SSF47323">
    <property type="entry name" value="Anticodon-binding domain of a subclass of class I aminoacyl-tRNA synthetases"/>
    <property type="match status" value="1"/>
</dbReference>
<dbReference type="SUPFAM" id="SSF52374">
    <property type="entry name" value="Nucleotidylyl transferase"/>
    <property type="match status" value="1"/>
</dbReference>
<reference key="1">
    <citation type="journal article" date="2006" name="J. Bacteriol.">
        <title>Complete genome sequence of Yersinia pestis strains Antiqua and Nepal516: evidence of gene reduction in an emerging pathogen.</title>
        <authorList>
            <person name="Chain P.S.G."/>
            <person name="Hu P."/>
            <person name="Malfatti S.A."/>
            <person name="Radnedge L."/>
            <person name="Larimer F."/>
            <person name="Vergez L.M."/>
            <person name="Worsham P."/>
            <person name="Chu M.C."/>
            <person name="Andersen G.L."/>
        </authorList>
    </citation>
    <scope>NUCLEOTIDE SEQUENCE [LARGE SCALE GENOMIC DNA]</scope>
    <source>
        <strain>Antiqua</strain>
    </source>
</reference>
<evidence type="ECO:0000255" key="1">
    <source>
        <dbReference type="HAMAP-Rule" id="MF_00041"/>
    </source>
</evidence>
<organism>
    <name type="scientific">Yersinia pestis bv. Antiqua (strain Antiqua)</name>
    <dbReference type="NCBI Taxonomy" id="360102"/>
    <lineage>
        <taxon>Bacteria</taxon>
        <taxon>Pseudomonadati</taxon>
        <taxon>Pseudomonadota</taxon>
        <taxon>Gammaproteobacteria</taxon>
        <taxon>Enterobacterales</taxon>
        <taxon>Yersiniaceae</taxon>
        <taxon>Yersinia</taxon>
    </lineage>
</organism>
<protein>
    <recommendedName>
        <fullName evidence="1">Cysteine--tRNA ligase</fullName>
        <ecNumber evidence="1">6.1.1.16</ecNumber>
    </recommendedName>
    <alternativeName>
        <fullName evidence="1">Cysteinyl-tRNA synthetase</fullName>
        <shortName evidence="1">CysRS</shortName>
    </alternativeName>
</protein>
<sequence length="461" mass="52162">MLKIFNTLSRQKEEFKPIHAGKVGMYVCGITIYDLCHIGHGRTFVAFDVVARYLRYLGYSLTYVRNVTDVDDKIIKRAIENNETCEQLTTRMLAEMHKDFDALNLERPDLEPRATHHIAEIIEMTERLIARGHAYVASNGDVMFAVDSDPDYGVLSRQDLDQLQAGARVEVADVKRNPMDFVLWKMSKPGEPRWESPWGPGRPGWHIECSAMNGKQLGAHFDIHGGGSDLMFPHHENEIAQSTCAHDGPYVNYWMHSGMVMIDKEKMSKSLNNFFTIRDVLAYYDAETVRYFLMSGHYRSQLNYSEENLKQARASLERLYTALRGTDANATPAGGAEFEARFRTAMDDDFNTPEAYSVLFDIAREVNRLKNEDMAAANGLAAELRKLAQVLGLLEQDPELFLQGGAQADDDEVAKIEALIKQRNDARSSKNWALADAARDQLNELGIVLEDGPQGTTWRRK</sequence>
<accession>Q1C4U1</accession>
<gene>
    <name evidence="1" type="primary">cysS</name>
    <name type="ordered locus">YPA_2568</name>
</gene>
<proteinExistence type="inferred from homology"/>
<keyword id="KW-0030">Aminoacyl-tRNA synthetase</keyword>
<keyword id="KW-0067">ATP-binding</keyword>
<keyword id="KW-0963">Cytoplasm</keyword>
<keyword id="KW-0436">Ligase</keyword>
<keyword id="KW-0479">Metal-binding</keyword>
<keyword id="KW-0547">Nucleotide-binding</keyword>
<keyword id="KW-0648">Protein biosynthesis</keyword>
<keyword id="KW-0862">Zinc</keyword>
<name>SYC_YERPA</name>
<comment type="catalytic activity">
    <reaction evidence="1">
        <text>tRNA(Cys) + L-cysteine + ATP = L-cysteinyl-tRNA(Cys) + AMP + diphosphate</text>
        <dbReference type="Rhea" id="RHEA:17773"/>
        <dbReference type="Rhea" id="RHEA-COMP:9661"/>
        <dbReference type="Rhea" id="RHEA-COMP:9679"/>
        <dbReference type="ChEBI" id="CHEBI:30616"/>
        <dbReference type="ChEBI" id="CHEBI:33019"/>
        <dbReference type="ChEBI" id="CHEBI:35235"/>
        <dbReference type="ChEBI" id="CHEBI:78442"/>
        <dbReference type="ChEBI" id="CHEBI:78517"/>
        <dbReference type="ChEBI" id="CHEBI:456215"/>
        <dbReference type="EC" id="6.1.1.16"/>
    </reaction>
</comment>
<comment type="cofactor">
    <cofactor evidence="1">
        <name>Zn(2+)</name>
        <dbReference type="ChEBI" id="CHEBI:29105"/>
    </cofactor>
    <text evidence="1">Binds 1 zinc ion per subunit.</text>
</comment>
<comment type="subunit">
    <text evidence="1">Monomer.</text>
</comment>
<comment type="subcellular location">
    <subcellularLocation>
        <location evidence="1">Cytoplasm</location>
    </subcellularLocation>
</comment>
<comment type="similarity">
    <text evidence="1">Belongs to the class-I aminoacyl-tRNA synthetase family.</text>
</comment>